<organism>
    <name type="scientific">Rickettsia bellii (strain OSU 85-389)</name>
    <dbReference type="NCBI Taxonomy" id="391896"/>
    <lineage>
        <taxon>Bacteria</taxon>
        <taxon>Pseudomonadati</taxon>
        <taxon>Pseudomonadota</taxon>
        <taxon>Alphaproteobacteria</taxon>
        <taxon>Rickettsiales</taxon>
        <taxon>Rickettsiaceae</taxon>
        <taxon>Rickettsieae</taxon>
        <taxon>Rickettsia</taxon>
        <taxon>belli group</taxon>
    </lineage>
</organism>
<keyword id="KW-0143">Chaperone</keyword>
<keyword id="KW-0963">Cytoplasm</keyword>
<keyword id="KW-0346">Stress response</keyword>
<protein>
    <recommendedName>
        <fullName evidence="1">Protein GrpE</fullName>
    </recommendedName>
    <alternativeName>
        <fullName evidence="1">HSP-70 cofactor</fullName>
    </alternativeName>
</protein>
<comment type="function">
    <text evidence="1">Participates actively in the response to hyperosmotic and heat shock by preventing the aggregation of stress-denatured proteins, in association with DnaK and GrpE. It is the nucleotide exchange factor for DnaK and may function as a thermosensor. Unfolded proteins bind initially to DnaJ; upon interaction with the DnaJ-bound protein, DnaK hydrolyzes its bound ATP, resulting in the formation of a stable complex. GrpE releases ADP from DnaK; ATP binding to DnaK triggers the release of the substrate protein, thus completing the reaction cycle. Several rounds of ATP-dependent interactions between DnaJ, DnaK and GrpE are required for fully efficient folding.</text>
</comment>
<comment type="subunit">
    <text evidence="1">Homodimer.</text>
</comment>
<comment type="subcellular location">
    <subcellularLocation>
        <location evidence="1">Cytoplasm</location>
    </subcellularLocation>
</comment>
<comment type="similarity">
    <text evidence="1">Belongs to the GrpE family.</text>
</comment>
<reference key="1">
    <citation type="submission" date="2007-09" db="EMBL/GenBank/DDBJ databases">
        <title>Complete genome sequencing of Rickettsia bellii.</title>
        <authorList>
            <person name="Madan A."/>
            <person name="Lee H."/>
            <person name="Madan A."/>
            <person name="Yoon J.-G."/>
            <person name="Ryu G.-Y."/>
            <person name="Dasch G."/>
            <person name="Ereemeva M."/>
        </authorList>
    </citation>
    <scope>NUCLEOTIDE SEQUENCE [LARGE SCALE GENOMIC DNA]</scope>
    <source>
        <strain>OSU 85-389</strain>
    </source>
</reference>
<sequence>MTDNNIENKEEEIINDIAEEVENTEIADLKAQIEELKDKLIRASAEIDNTRKRLEKARDEARDYAITTFAKELLNVSDNLSRALEHKPLDASVEVTNIIAGVQMTKDELDKVFHKHHIEEIKPEIGSTFDYNLHNAISQIEHPDHEPNSVINIMQVGYRIKDRLLRPATVQVTKKT</sequence>
<feature type="chain" id="PRO_1000053635" description="Protein GrpE">
    <location>
        <begin position="1"/>
        <end position="176"/>
    </location>
</feature>
<evidence type="ECO:0000255" key="1">
    <source>
        <dbReference type="HAMAP-Rule" id="MF_01151"/>
    </source>
</evidence>
<name>GRPE_RICB8</name>
<dbReference type="EMBL" id="CP000849">
    <property type="protein sequence ID" value="ABV79051.1"/>
    <property type="molecule type" value="Genomic_DNA"/>
</dbReference>
<dbReference type="RefSeq" id="WP_011477275.1">
    <property type="nucleotide sequence ID" value="NC_009883.1"/>
</dbReference>
<dbReference type="SMR" id="A8GW24"/>
<dbReference type="KEGG" id="rbo:A1I_03460"/>
<dbReference type="HOGENOM" id="CLU_057217_6_2_5"/>
<dbReference type="GO" id="GO:0005737">
    <property type="term" value="C:cytoplasm"/>
    <property type="evidence" value="ECO:0007669"/>
    <property type="project" value="UniProtKB-SubCell"/>
</dbReference>
<dbReference type="GO" id="GO:0000774">
    <property type="term" value="F:adenyl-nucleotide exchange factor activity"/>
    <property type="evidence" value="ECO:0007669"/>
    <property type="project" value="InterPro"/>
</dbReference>
<dbReference type="GO" id="GO:0042803">
    <property type="term" value="F:protein homodimerization activity"/>
    <property type="evidence" value="ECO:0007669"/>
    <property type="project" value="InterPro"/>
</dbReference>
<dbReference type="GO" id="GO:0051087">
    <property type="term" value="F:protein-folding chaperone binding"/>
    <property type="evidence" value="ECO:0007669"/>
    <property type="project" value="InterPro"/>
</dbReference>
<dbReference type="GO" id="GO:0051082">
    <property type="term" value="F:unfolded protein binding"/>
    <property type="evidence" value="ECO:0007669"/>
    <property type="project" value="TreeGrafter"/>
</dbReference>
<dbReference type="GO" id="GO:0006457">
    <property type="term" value="P:protein folding"/>
    <property type="evidence" value="ECO:0007669"/>
    <property type="project" value="InterPro"/>
</dbReference>
<dbReference type="GO" id="GO:0030150">
    <property type="term" value="P:protein import into mitochondrial matrix"/>
    <property type="evidence" value="ECO:0007669"/>
    <property type="project" value="TreeGrafter"/>
</dbReference>
<dbReference type="CDD" id="cd00446">
    <property type="entry name" value="GrpE"/>
    <property type="match status" value="1"/>
</dbReference>
<dbReference type="FunFam" id="2.30.22.10:FF:000001">
    <property type="entry name" value="Protein GrpE"/>
    <property type="match status" value="1"/>
</dbReference>
<dbReference type="Gene3D" id="3.90.20.20">
    <property type="match status" value="1"/>
</dbReference>
<dbReference type="Gene3D" id="2.30.22.10">
    <property type="entry name" value="Head domain of nucleotide exchange factor GrpE"/>
    <property type="match status" value="1"/>
</dbReference>
<dbReference type="HAMAP" id="MF_01151">
    <property type="entry name" value="GrpE"/>
    <property type="match status" value="1"/>
</dbReference>
<dbReference type="InterPro" id="IPR000740">
    <property type="entry name" value="GrpE"/>
</dbReference>
<dbReference type="InterPro" id="IPR013805">
    <property type="entry name" value="GrpE_coiled_coil"/>
</dbReference>
<dbReference type="InterPro" id="IPR009012">
    <property type="entry name" value="GrpE_head"/>
</dbReference>
<dbReference type="NCBIfam" id="NF010758">
    <property type="entry name" value="PRK14161.1"/>
    <property type="match status" value="1"/>
</dbReference>
<dbReference type="PANTHER" id="PTHR21237">
    <property type="entry name" value="GRPE PROTEIN"/>
    <property type="match status" value="1"/>
</dbReference>
<dbReference type="PANTHER" id="PTHR21237:SF23">
    <property type="entry name" value="GRPE PROTEIN HOMOLOG, MITOCHONDRIAL"/>
    <property type="match status" value="1"/>
</dbReference>
<dbReference type="Pfam" id="PF01025">
    <property type="entry name" value="GrpE"/>
    <property type="match status" value="1"/>
</dbReference>
<dbReference type="PRINTS" id="PR00773">
    <property type="entry name" value="GRPEPROTEIN"/>
</dbReference>
<dbReference type="SUPFAM" id="SSF58014">
    <property type="entry name" value="Coiled-coil domain of nucleotide exchange factor GrpE"/>
    <property type="match status" value="1"/>
</dbReference>
<dbReference type="SUPFAM" id="SSF51064">
    <property type="entry name" value="Head domain of nucleotide exchange factor GrpE"/>
    <property type="match status" value="1"/>
</dbReference>
<dbReference type="PROSITE" id="PS01071">
    <property type="entry name" value="GRPE"/>
    <property type="match status" value="1"/>
</dbReference>
<gene>
    <name evidence="1" type="primary">grpE</name>
    <name type="ordered locus">A1I_03460</name>
</gene>
<proteinExistence type="inferred from homology"/>
<accession>A8GW24</accession>